<gene>
    <name evidence="1" type="primary">rimO</name>
    <name type="ordered locus">Shewana3_3627</name>
</gene>
<evidence type="ECO:0000255" key="1">
    <source>
        <dbReference type="HAMAP-Rule" id="MF_01865"/>
    </source>
</evidence>
<evidence type="ECO:0000255" key="2">
    <source>
        <dbReference type="PROSITE-ProRule" id="PRU01266"/>
    </source>
</evidence>
<feature type="chain" id="PRO_0000375005" description="Ribosomal protein uS12 methylthiotransferase RimO">
    <location>
        <begin position="1"/>
        <end position="480"/>
    </location>
</feature>
<feature type="domain" description="MTTase N-terminal" evidence="1">
    <location>
        <begin position="37"/>
        <end position="147"/>
    </location>
</feature>
<feature type="domain" description="Radical SAM core" evidence="2">
    <location>
        <begin position="165"/>
        <end position="402"/>
    </location>
</feature>
<feature type="domain" description="TRAM" evidence="1">
    <location>
        <begin position="405"/>
        <end position="471"/>
    </location>
</feature>
<feature type="binding site" evidence="1">
    <location>
        <position position="46"/>
    </location>
    <ligand>
        <name>[4Fe-4S] cluster</name>
        <dbReference type="ChEBI" id="CHEBI:49883"/>
        <label>1</label>
    </ligand>
</feature>
<feature type="binding site" evidence="1">
    <location>
        <position position="82"/>
    </location>
    <ligand>
        <name>[4Fe-4S] cluster</name>
        <dbReference type="ChEBI" id="CHEBI:49883"/>
        <label>1</label>
    </ligand>
</feature>
<feature type="binding site" evidence="1">
    <location>
        <position position="111"/>
    </location>
    <ligand>
        <name>[4Fe-4S] cluster</name>
        <dbReference type="ChEBI" id="CHEBI:49883"/>
        <label>1</label>
    </ligand>
</feature>
<feature type="binding site" evidence="1">
    <location>
        <position position="179"/>
    </location>
    <ligand>
        <name>[4Fe-4S] cluster</name>
        <dbReference type="ChEBI" id="CHEBI:49883"/>
        <label>2</label>
        <note>4Fe-4S-S-AdoMet</note>
    </ligand>
</feature>
<feature type="binding site" evidence="1">
    <location>
        <position position="183"/>
    </location>
    <ligand>
        <name>[4Fe-4S] cluster</name>
        <dbReference type="ChEBI" id="CHEBI:49883"/>
        <label>2</label>
        <note>4Fe-4S-S-AdoMet</note>
    </ligand>
</feature>
<feature type="binding site" evidence="1">
    <location>
        <position position="186"/>
    </location>
    <ligand>
        <name>[4Fe-4S] cluster</name>
        <dbReference type="ChEBI" id="CHEBI:49883"/>
        <label>2</label>
        <note>4Fe-4S-S-AdoMet</note>
    </ligand>
</feature>
<proteinExistence type="inferred from homology"/>
<protein>
    <recommendedName>
        <fullName evidence="1">Ribosomal protein uS12 methylthiotransferase RimO</fullName>
        <shortName evidence="1">uS12 MTTase</shortName>
        <shortName evidence="1">uS12 methylthiotransferase</shortName>
        <ecNumber evidence="1">2.8.4.4</ecNumber>
    </recommendedName>
    <alternativeName>
        <fullName evidence="1">Ribosomal protein uS12 (aspartate-C(3))-methylthiotransferase</fullName>
    </alternativeName>
    <alternativeName>
        <fullName evidence="1">Ribosome maturation factor RimO</fullName>
    </alternativeName>
</protein>
<organism>
    <name type="scientific">Shewanella sp. (strain ANA-3)</name>
    <dbReference type="NCBI Taxonomy" id="94122"/>
    <lineage>
        <taxon>Bacteria</taxon>
        <taxon>Pseudomonadati</taxon>
        <taxon>Pseudomonadota</taxon>
        <taxon>Gammaproteobacteria</taxon>
        <taxon>Alteromonadales</taxon>
        <taxon>Shewanellaceae</taxon>
        <taxon>Shewanella</taxon>
    </lineage>
</organism>
<comment type="function">
    <text evidence="1">Catalyzes the methylthiolation of an aspartic acid residue of ribosomal protein uS12.</text>
</comment>
<comment type="catalytic activity">
    <reaction evidence="1">
        <text>L-aspartate(89)-[ribosomal protein uS12]-hydrogen + (sulfur carrier)-SH + AH2 + 2 S-adenosyl-L-methionine = 3-methylsulfanyl-L-aspartate(89)-[ribosomal protein uS12]-hydrogen + (sulfur carrier)-H + 5'-deoxyadenosine + L-methionine + A + S-adenosyl-L-homocysteine + 2 H(+)</text>
        <dbReference type="Rhea" id="RHEA:37087"/>
        <dbReference type="Rhea" id="RHEA-COMP:10460"/>
        <dbReference type="Rhea" id="RHEA-COMP:10461"/>
        <dbReference type="Rhea" id="RHEA-COMP:14737"/>
        <dbReference type="Rhea" id="RHEA-COMP:14739"/>
        <dbReference type="ChEBI" id="CHEBI:13193"/>
        <dbReference type="ChEBI" id="CHEBI:15378"/>
        <dbReference type="ChEBI" id="CHEBI:17319"/>
        <dbReference type="ChEBI" id="CHEBI:17499"/>
        <dbReference type="ChEBI" id="CHEBI:29917"/>
        <dbReference type="ChEBI" id="CHEBI:29961"/>
        <dbReference type="ChEBI" id="CHEBI:57844"/>
        <dbReference type="ChEBI" id="CHEBI:57856"/>
        <dbReference type="ChEBI" id="CHEBI:59789"/>
        <dbReference type="ChEBI" id="CHEBI:64428"/>
        <dbReference type="ChEBI" id="CHEBI:73599"/>
        <dbReference type="EC" id="2.8.4.4"/>
    </reaction>
</comment>
<comment type="cofactor">
    <cofactor evidence="1">
        <name>[4Fe-4S] cluster</name>
        <dbReference type="ChEBI" id="CHEBI:49883"/>
    </cofactor>
    <text evidence="1">Binds 2 [4Fe-4S] clusters. One cluster is coordinated with 3 cysteines and an exchangeable S-adenosyl-L-methionine.</text>
</comment>
<comment type="subcellular location">
    <subcellularLocation>
        <location evidence="1">Cytoplasm</location>
    </subcellularLocation>
</comment>
<comment type="similarity">
    <text evidence="1">Belongs to the methylthiotransferase family. RimO subfamily.</text>
</comment>
<keyword id="KW-0004">4Fe-4S</keyword>
<keyword id="KW-0963">Cytoplasm</keyword>
<keyword id="KW-0408">Iron</keyword>
<keyword id="KW-0411">Iron-sulfur</keyword>
<keyword id="KW-0479">Metal-binding</keyword>
<keyword id="KW-0949">S-adenosyl-L-methionine</keyword>
<keyword id="KW-0808">Transferase</keyword>
<accession>A0L1C8</accession>
<sequence>MTVETFNPKQTTTLETPAKTLEAASADLANAESATGNRIGFVSLGCPKNLVDSERILTQLRIDGYEVTNSYDNADLVIVNTCGFIDAAVEESLDAVREALEENGKVIVTGCLGAKENQIREVHPDVLEITGPHSYEAVLKHVHKYVPKPEHNPFTSLIPQTGVKLTPKHYAYLKISEGCDNRCTFCIIPALRGDLDSRPAGSVLDEAKRLVESGVQEILVVSQDTSAYGKDKGGRTDFWNGMPVKQDITSLARQLGKMGAWVRLHYIYPYPWVDDLIPLMAEGLILPYLDIPMQHASPRILKMMKRPGRVDRQLEAIQRWREICPDLVIRSTFIVGFPGETEEDFEMLLDFLREARLDRVGCFKYSEVEGAVANTIAELISEDVKEDRYHRFMEVQAEISAERLARFVGRTMDILIDDVDEEGAIGRSFADAPEIDGMVFINGETELEPGMLVRAVITHSDEHDLWAELVDADAEDDIEA</sequence>
<name>RIMO_SHESA</name>
<dbReference type="EC" id="2.8.4.4" evidence="1"/>
<dbReference type="EMBL" id="CP000469">
    <property type="protein sequence ID" value="ABK49847.1"/>
    <property type="molecule type" value="Genomic_DNA"/>
</dbReference>
<dbReference type="RefSeq" id="WP_011718402.1">
    <property type="nucleotide sequence ID" value="NC_008577.1"/>
</dbReference>
<dbReference type="SMR" id="A0L1C8"/>
<dbReference type="STRING" id="94122.Shewana3_3627"/>
<dbReference type="KEGG" id="shn:Shewana3_3627"/>
<dbReference type="eggNOG" id="COG0621">
    <property type="taxonomic scope" value="Bacteria"/>
</dbReference>
<dbReference type="HOGENOM" id="CLU_018697_0_0_6"/>
<dbReference type="OrthoDB" id="9805215at2"/>
<dbReference type="Proteomes" id="UP000002589">
    <property type="component" value="Chromosome"/>
</dbReference>
<dbReference type="GO" id="GO:0005829">
    <property type="term" value="C:cytosol"/>
    <property type="evidence" value="ECO:0007669"/>
    <property type="project" value="TreeGrafter"/>
</dbReference>
<dbReference type="GO" id="GO:0051539">
    <property type="term" value="F:4 iron, 4 sulfur cluster binding"/>
    <property type="evidence" value="ECO:0007669"/>
    <property type="project" value="UniProtKB-UniRule"/>
</dbReference>
<dbReference type="GO" id="GO:0035599">
    <property type="term" value="F:aspartic acid methylthiotransferase activity"/>
    <property type="evidence" value="ECO:0007669"/>
    <property type="project" value="TreeGrafter"/>
</dbReference>
<dbReference type="GO" id="GO:0046872">
    <property type="term" value="F:metal ion binding"/>
    <property type="evidence" value="ECO:0007669"/>
    <property type="project" value="UniProtKB-KW"/>
</dbReference>
<dbReference type="GO" id="GO:0103039">
    <property type="term" value="F:protein methylthiotransferase activity"/>
    <property type="evidence" value="ECO:0007669"/>
    <property type="project" value="UniProtKB-EC"/>
</dbReference>
<dbReference type="GO" id="GO:0006400">
    <property type="term" value="P:tRNA modification"/>
    <property type="evidence" value="ECO:0007669"/>
    <property type="project" value="InterPro"/>
</dbReference>
<dbReference type="CDD" id="cd01335">
    <property type="entry name" value="Radical_SAM"/>
    <property type="match status" value="1"/>
</dbReference>
<dbReference type="FunFam" id="2.40.50.140:FF:000060">
    <property type="entry name" value="Ribosomal protein S12 methylthiotransferase RimO"/>
    <property type="match status" value="1"/>
</dbReference>
<dbReference type="FunFam" id="3.40.50.12160:FF:000002">
    <property type="entry name" value="Ribosomal protein S12 methylthiotransferase RimO"/>
    <property type="match status" value="1"/>
</dbReference>
<dbReference type="FunFam" id="3.80.30.20:FF:000001">
    <property type="entry name" value="tRNA-2-methylthio-N(6)-dimethylallyladenosine synthase 2"/>
    <property type="match status" value="1"/>
</dbReference>
<dbReference type="Gene3D" id="3.40.50.12160">
    <property type="entry name" value="Methylthiotransferase, N-terminal domain"/>
    <property type="match status" value="1"/>
</dbReference>
<dbReference type="Gene3D" id="2.40.50.140">
    <property type="entry name" value="Nucleic acid-binding proteins"/>
    <property type="match status" value="1"/>
</dbReference>
<dbReference type="Gene3D" id="3.80.30.20">
    <property type="entry name" value="tm_1862 like domain"/>
    <property type="match status" value="1"/>
</dbReference>
<dbReference type="HAMAP" id="MF_01865">
    <property type="entry name" value="MTTase_RimO"/>
    <property type="match status" value="1"/>
</dbReference>
<dbReference type="InterPro" id="IPR006638">
    <property type="entry name" value="Elp3/MiaA/NifB-like_rSAM"/>
</dbReference>
<dbReference type="InterPro" id="IPR005839">
    <property type="entry name" value="Methylthiotransferase"/>
</dbReference>
<dbReference type="InterPro" id="IPR020612">
    <property type="entry name" value="Methylthiotransferase_CS"/>
</dbReference>
<dbReference type="InterPro" id="IPR013848">
    <property type="entry name" value="Methylthiotransferase_N"/>
</dbReference>
<dbReference type="InterPro" id="IPR038135">
    <property type="entry name" value="Methylthiotransferase_N_sf"/>
</dbReference>
<dbReference type="InterPro" id="IPR012340">
    <property type="entry name" value="NA-bd_OB-fold"/>
</dbReference>
<dbReference type="InterPro" id="IPR005840">
    <property type="entry name" value="Ribosomal_uS12_MeSTrfase_RimO"/>
</dbReference>
<dbReference type="InterPro" id="IPR007197">
    <property type="entry name" value="rSAM"/>
</dbReference>
<dbReference type="InterPro" id="IPR023404">
    <property type="entry name" value="rSAM_horseshoe"/>
</dbReference>
<dbReference type="InterPro" id="IPR002792">
    <property type="entry name" value="TRAM_dom"/>
</dbReference>
<dbReference type="NCBIfam" id="TIGR01125">
    <property type="entry name" value="30S ribosomal protein S12 methylthiotransferase RimO"/>
    <property type="match status" value="1"/>
</dbReference>
<dbReference type="NCBIfam" id="TIGR00089">
    <property type="entry name" value="MiaB/RimO family radical SAM methylthiotransferase"/>
    <property type="match status" value="1"/>
</dbReference>
<dbReference type="PANTHER" id="PTHR43837">
    <property type="entry name" value="RIBOSOMAL PROTEIN S12 METHYLTHIOTRANSFERASE RIMO"/>
    <property type="match status" value="1"/>
</dbReference>
<dbReference type="PANTHER" id="PTHR43837:SF1">
    <property type="entry name" value="RIBOSOMAL PROTEIN US12 METHYLTHIOTRANSFERASE RIMO"/>
    <property type="match status" value="1"/>
</dbReference>
<dbReference type="Pfam" id="PF04055">
    <property type="entry name" value="Radical_SAM"/>
    <property type="match status" value="1"/>
</dbReference>
<dbReference type="Pfam" id="PF18693">
    <property type="entry name" value="TRAM_2"/>
    <property type="match status" value="1"/>
</dbReference>
<dbReference type="Pfam" id="PF00919">
    <property type="entry name" value="UPF0004"/>
    <property type="match status" value="1"/>
</dbReference>
<dbReference type="SFLD" id="SFLDG01082">
    <property type="entry name" value="B12-binding_domain_containing"/>
    <property type="match status" value="1"/>
</dbReference>
<dbReference type="SFLD" id="SFLDG01061">
    <property type="entry name" value="methylthiotransferase"/>
    <property type="match status" value="1"/>
</dbReference>
<dbReference type="SFLD" id="SFLDF00274">
    <property type="entry name" value="ribosomal_protein_S12_methylth"/>
    <property type="match status" value="1"/>
</dbReference>
<dbReference type="SMART" id="SM00729">
    <property type="entry name" value="Elp3"/>
    <property type="match status" value="1"/>
</dbReference>
<dbReference type="SUPFAM" id="SSF102114">
    <property type="entry name" value="Radical SAM enzymes"/>
    <property type="match status" value="1"/>
</dbReference>
<dbReference type="PROSITE" id="PS51449">
    <property type="entry name" value="MTTASE_N"/>
    <property type="match status" value="1"/>
</dbReference>
<dbReference type="PROSITE" id="PS01278">
    <property type="entry name" value="MTTASE_RADICAL"/>
    <property type="match status" value="1"/>
</dbReference>
<dbReference type="PROSITE" id="PS51918">
    <property type="entry name" value="RADICAL_SAM"/>
    <property type="match status" value="1"/>
</dbReference>
<dbReference type="PROSITE" id="PS50926">
    <property type="entry name" value="TRAM"/>
    <property type="match status" value="1"/>
</dbReference>
<reference key="1">
    <citation type="submission" date="2006-09" db="EMBL/GenBank/DDBJ databases">
        <title>Complete sequence of chromosome 1 of Shewanella sp. ANA-3.</title>
        <authorList>
            <person name="Copeland A."/>
            <person name="Lucas S."/>
            <person name="Lapidus A."/>
            <person name="Barry K."/>
            <person name="Detter J.C."/>
            <person name="Glavina del Rio T."/>
            <person name="Hammon N."/>
            <person name="Israni S."/>
            <person name="Dalin E."/>
            <person name="Tice H."/>
            <person name="Pitluck S."/>
            <person name="Chertkov O."/>
            <person name="Brettin T."/>
            <person name="Bruce D."/>
            <person name="Han C."/>
            <person name="Tapia R."/>
            <person name="Gilna P."/>
            <person name="Schmutz J."/>
            <person name="Larimer F."/>
            <person name="Land M."/>
            <person name="Hauser L."/>
            <person name="Kyrpides N."/>
            <person name="Kim E."/>
            <person name="Newman D."/>
            <person name="Salticov C."/>
            <person name="Konstantinidis K."/>
            <person name="Klappenback J."/>
            <person name="Tiedje J."/>
            <person name="Richardson P."/>
        </authorList>
    </citation>
    <scope>NUCLEOTIDE SEQUENCE [LARGE SCALE GENOMIC DNA]</scope>
    <source>
        <strain>ANA-3</strain>
    </source>
</reference>